<name>MTEF2_RAT</name>
<comment type="function">
    <text evidence="1">Binds mitochondrial DNA and plays a role in the regulation of transcription of mitochondrial mRNA and rRNA species.</text>
</comment>
<comment type="subunit">
    <text evidence="1">Monomer.</text>
</comment>
<comment type="subcellular location">
    <subcellularLocation>
        <location evidence="2">Mitochondrion matrix</location>
        <location evidence="2">Mitochondrion nucleoid</location>
    </subcellularLocation>
</comment>
<comment type="similarity">
    <text evidence="3">Belongs to the mTERF family.</text>
</comment>
<organism>
    <name type="scientific">Rattus norvegicus</name>
    <name type="common">Rat</name>
    <dbReference type="NCBI Taxonomy" id="10116"/>
    <lineage>
        <taxon>Eukaryota</taxon>
        <taxon>Metazoa</taxon>
        <taxon>Chordata</taxon>
        <taxon>Craniata</taxon>
        <taxon>Vertebrata</taxon>
        <taxon>Euteleostomi</taxon>
        <taxon>Mammalia</taxon>
        <taxon>Eutheria</taxon>
        <taxon>Euarchontoglires</taxon>
        <taxon>Glires</taxon>
        <taxon>Rodentia</taxon>
        <taxon>Myomorpha</taxon>
        <taxon>Muroidea</taxon>
        <taxon>Muridae</taxon>
        <taxon>Murinae</taxon>
        <taxon>Rattus</taxon>
    </lineage>
</organism>
<evidence type="ECO:0000250" key="1">
    <source>
        <dbReference type="UniProtKB" id="Q49AM1"/>
    </source>
</evidence>
<evidence type="ECO:0000250" key="2">
    <source>
        <dbReference type="UniProtKB" id="Q8BKY8"/>
    </source>
</evidence>
<evidence type="ECO:0000305" key="3"/>
<protein>
    <recommendedName>
        <fullName>Transcription termination factor 2, mitochondrial</fullName>
    </recommendedName>
    <alternativeName>
        <fullName>Mitochondrial transcription termination factor 2</fullName>
        <shortName>mTERF2</shortName>
    </alternativeName>
    <alternativeName>
        <fullName>mTERF domain-containing protein 3, mitochondrial</fullName>
    </alternativeName>
</protein>
<proteinExistence type="evidence at transcript level"/>
<reference key="1">
    <citation type="journal article" date="2004" name="Genome Res.">
        <title>The status, quality, and expansion of the NIH full-length cDNA project: the Mammalian Gene Collection (MGC).</title>
        <authorList>
            <consortium name="The MGC Project Team"/>
        </authorList>
    </citation>
    <scope>NUCLEOTIDE SEQUENCE [LARGE SCALE MRNA]</scope>
    <source>
        <tissue>Heart</tissue>
        <tissue>Thymus</tissue>
    </source>
</reference>
<sequence length="385" mass="43344">MSWRLLTGYQLCRLRLFRKPQPALKIRPSSVCVTYGTDCQSNKENKRTVETLRACSVDIGKICRLKGWVLLEEETYAEEIANILKELGANQTVIASILERCPEAIVCSPAAVNTKRKLWQMVCKTKTELIQLIEQFPESFFAVKDQENQKLNVQFFQELGLKNVVITRFLTTASSIFHNPVENNKQMIGVLLESYLNLGGSEANAKVWLLKLLSQNPFIVLSSPTAVGEVLKFLQGQGFTDSEVLQLLSKLKGFLFQLQPGSIQNSISFTKTTFECTDHDLRQLVVKCPALLYYPAPVLEERIQALLKEGISVAQIRASPMVLELTPQIIQYRIRKLNSLGYGIKDGHLASLNGTKKEFEANFSKMQAKQGRPLFNPVASLKVEE</sequence>
<gene>
    <name type="primary">Mterf2</name>
    <name type="synonym">Mterfd3</name>
</gene>
<keyword id="KW-0496">Mitochondrion</keyword>
<keyword id="KW-1135">Mitochondrion nucleoid</keyword>
<keyword id="KW-1185">Reference proteome</keyword>
<keyword id="KW-0804">Transcription</keyword>
<keyword id="KW-0805">Transcription regulation</keyword>
<keyword id="KW-0809">Transit peptide</keyword>
<accession>Q5XIE2</accession>
<feature type="transit peptide" description="Mitochondrion" evidence="1">
    <location>
        <begin position="1"/>
        <end position="35"/>
    </location>
</feature>
<feature type="chain" id="PRO_0000255467" description="Transcription termination factor 2, mitochondrial">
    <location>
        <begin position="36"/>
        <end position="385"/>
    </location>
</feature>
<dbReference type="EMBL" id="BC083741">
    <property type="protein sequence ID" value="AAH83741.1"/>
    <property type="molecule type" value="mRNA"/>
</dbReference>
<dbReference type="EMBL" id="BC098693">
    <property type="protein sequence ID" value="AAH98693.1"/>
    <property type="molecule type" value="mRNA"/>
</dbReference>
<dbReference type="RefSeq" id="NP_001014287.1">
    <property type="nucleotide sequence ID" value="NM_001014265.2"/>
</dbReference>
<dbReference type="SMR" id="Q5XIE2"/>
<dbReference type="FunCoup" id="Q5XIE2">
    <property type="interactions" value="489"/>
</dbReference>
<dbReference type="STRING" id="10116.ENSRNOP00000009135"/>
<dbReference type="PhosphoSitePlus" id="Q5XIE2"/>
<dbReference type="PaxDb" id="10116-ENSRNOP00000009135"/>
<dbReference type="GeneID" id="366856"/>
<dbReference type="KEGG" id="rno:366856"/>
<dbReference type="UCSC" id="RGD:1311836">
    <property type="organism name" value="rat"/>
</dbReference>
<dbReference type="AGR" id="RGD:1311836"/>
<dbReference type="CTD" id="80298"/>
<dbReference type="RGD" id="1311836">
    <property type="gene designation" value="Mterf2"/>
</dbReference>
<dbReference type="VEuPathDB" id="HostDB:ENSRNOG00000006978"/>
<dbReference type="eggNOG" id="KOG1267">
    <property type="taxonomic scope" value="Eukaryota"/>
</dbReference>
<dbReference type="HOGENOM" id="CLU_058644_0_0_1"/>
<dbReference type="InParanoid" id="Q5XIE2"/>
<dbReference type="PhylomeDB" id="Q5XIE2"/>
<dbReference type="TreeFam" id="TF330821"/>
<dbReference type="PRO" id="PR:Q5XIE2"/>
<dbReference type="Proteomes" id="UP000002494">
    <property type="component" value="Chromosome 7"/>
</dbReference>
<dbReference type="Bgee" id="ENSRNOG00000006978">
    <property type="expression patterns" value="Expressed in heart and 19 other cell types or tissues"/>
</dbReference>
<dbReference type="GO" id="GO:0005759">
    <property type="term" value="C:mitochondrial matrix"/>
    <property type="evidence" value="ECO:0000318"/>
    <property type="project" value="GO_Central"/>
</dbReference>
<dbReference type="GO" id="GO:0042645">
    <property type="term" value="C:mitochondrial nucleoid"/>
    <property type="evidence" value="ECO:0000250"/>
    <property type="project" value="UniProtKB"/>
</dbReference>
<dbReference type="GO" id="GO:0005739">
    <property type="term" value="C:mitochondrion"/>
    <property type="evidence" value="ECO:0000266"/>
    <property type="project" value="RGD"/>
</dbReference>
<dbReference type="GO" id="GO:0003677">
    <property type="term" value="F:DNA binding"/>
    <property type="evidence" value="ECO:0000250"/>
    <property type="project" value="UniProtKB"/>
</dbReference>
<dbReference type="GO" id="GO:0003690">
    <property type="term" value="F:double-stranded DNA binding"/>
    <property type="evidence" value="ECO:0007669"/>
    <property type="project" value="InterPro"/>
</dbReference>
<dbReference type="GO" id="GO:0003676">
    <property type="term" value="F:nucleic acid binding"/>
    <property type="evidence" value="ECO:0000318"/>
    <property type="project" value="GO_Central"/>
</dbReference>
<dbReference type="GO" id="GO:0006355">
    <property type="term" value="P:regulation of DNA-templated transcription"/>
    <property type="evidence" value="ECO:0007669"/>
    <property type="project" value="InterPro"/>
</dbReference>
<dbReference type="GO" id="GO:0006393">
    <property type="term" value="P:termination of mitochondrial transcription"/>
    <property type="evidence" value="ECO:0000318"/>
    <property type="project" value="GO_Central"/>
</dbReference>
<dbReference type="FunFam" id="1.25.70.10:FF:000003">
    <property type="entry name" value="transcription termination factor 2, mitochondrial"/>
    <property type="match status" value="1"/>
</dbReference>
<dbReference type="Gene3D" id="1.25.70.10">
    <property type="entry name" value="Transcription termination factor 3, mitochondrial"/>
    <property type="match status" value="1"/>
</dbReference>
<dbReference type="InterPro" id="IPR003690">
    <property type="entry name" value="MTERF"/>
</dbReference>
<dbReference type="InterPro" id="IPR038538">
    <property type="entry name" value="MTERF_sf"/>
</dbReference>
<dbReference type="PANTHER" id="PTHR15437:SF1">
    <property type="entry name" value="TRANSCRIPTION TERMINATION FACTOR 2, MITOCHONDRIAL"/>
    <property type="match status" value="1"/>
</dbReference>
<dbReference type="PANTHER" id="PTHR15437">
    <property type="entry name" value="TRANSCRIPTION TERMINATION FACTOR, MITOCHONDRIAL"/>
    <property type="match status" value="1"/>
</dbReference>
<dbReference type="Pfam" id="PF02536">
    <property type="entry name" value="mTERF"/>
    <property type="match status" value="1"/>
</dbReference>
<dbReference type="SMART" id="SM00733">
    <property type="entry name" value="Mterf"/>
    <property type="match status" value="4"/>
</dbReference>